<proteinExistence type="inferred from homology"/>
<keyword id="KW-0150">Chloroplast</keyword>
<keyword id="KW-0934">Plastid</keyword>
<keyword id="KW-0687">Ribonucleoprotein</keyword>
<keyword id="KW-0689">Ribosomal protein</keyword>
<keyword id="KW-0694">RNA-binding</keyword>
<keyword id="KW-0699">rRNA-binding</keyword>
<reference key="1">
    <citation type="journal article" date="2006" name="Mol. Biol. Evol.">
        <title>The chloroplast genome sequence of Chara vulgaris sheds new light into the closest green algal relatives of land plants.</title>
        <authorList>
            <person name="Turmel M."/>
            <person name="Otis C."/>
            <person name="Lemieux C."/>
        </authorList>
    </citation>
    <scope>NUCLEOTIDE SEQUENCE [LARGE SCALE GENOMIC DNA]</scope>
</reference>
<gene>
    <name evidence="1" type="primary">rps19</name>
</gene>
<evidence type="ECO:0000255" key="1">
    <source>
        <dbReference type="HAMAP-Rule" id="MF_00531"/>
    </source>
</evidence>
<evidence type="ECO:0000305" key="2"/>
<sequence length="92" mass="10462">MTRSLKKGPFIANHLLKKVHILNLEAQKKVILTWSRGSTIIPSMIGHTIAIHNGREHIPIFITDQMVGHKLGEFSATRTFRGHAKNDKKSRR</sequence>
<comment type="function">
    <text evidence="1">Protein S19 forms a complex with S13 that binds strongly to the 16S ribosomal RNA.</text>
</comment>
<comment type="subcellular location">
    <subcellularLocation>
        <location>Plastid</location>
        <location>Chloroplast</location>
    </subcellularLocation>
</comment>
<comment type="similarity">
    <text evidence="1">Belongs to the universal ribosomal protein uS19 family.</text>
</comment>
<dbReference type="EMBL" id="DQ229107">
    <property type="protein sequence ID" value="ABA61958.1"/>
    <property type="molecule type" value="Genomic_DNA"/>
</dbReference>
<dbReference type="RefSeq" id="YP_635790.1">
    <property type="nucleotide sequence ID" value="NC_008097.1"/>
</dbReference>
<dbReference type="SMR" id="Q1ACF7"/>
<dbReference type="GeneID" id="4100324"/>
<dbReference type="GO" id="GO:0009507">
    <property type="term" value="C:chloroplast"/>
    <property type="evidence" value="ECO:0007669"/>
    <property type="project" value="UniProtKB-SubCell"/>
</dbReference>
<dbReference type="GO" id="GO:0005763">
    <property type="term" value="C:mitochondrial small ribosomal subunit"/>
    <property type="evidence" value="ECO:0007669"/>
    <property type="project" value="TreeGrafter"/>
</dbReference>
<dbReference type="GO" id="GO:0019843">
    <property type="term" value="F:rRNA binding"/>
    <property type="evidence" value="ECO:0007669"/>
    <property type="project" value="UniProtKB-UniRule"/>
</dbReference>
<dbReference type="GO" id="GO:0003735">
    <property type="term" value="F:structural constituent of ribosome"/>
    <property type="evidence" value="ECO:0007669"/>
    <property type="project" value="InterPro"/>
</dbReference>
<dbReference type="GO" id="GO:0000028">
    <property type="term" value="P:ribosomal small subunit assembly"/>
    <property type="evidence" value="ECO:0007669"/>
    <property type="project" value="TreeGrafter"/>
</dbReference>
<dbReference type="GO" id="GO:0006412">
    <property type="term" value="P:translation"/>
    <property type="evidence" value="ECO:0007669"/>
    <property type="project" value="UniProtKB-UniRule"/>
</dbReference>
<dbReference type="FunFam" id="3.30.860.10:FF:000001">
    <property type="entry name" value="30S ribosomal protein S19"/>
    <property type="match status" value="1"/>
</dbReference>
<dbReference type="Gene3D" id="3.30.860.10">
    <property type="entry name" value="30s Ribosomal Protein S19, Chain A"/>
    <property type="match status" value="1"/>
</dbReference>
<dbReference type="HAMAP" id="MF_00531">
    <property type="entry name" value="Ribosomal_uS19"/>
    <property type="match status" value="1"/>
</dbReference>
<dbReference type="InterPro" id="IPR002222">
    <property type="entry name" value="Ribosomal_uS19"/>
</dbReference>
<dbReference type="InterPro" id="IPR005732">
    <property type="entry name" value="Ribosomal_uS19_bac-type"/>
</dbReference>
<dbReference type="InterPro" id="IPR020934">
    <property type="entry name" value="Ribosomal_uS19_CS"/>
</dbReference>
<dbReference type="InterPro" id="IPR023575">
    <property type="entry name" value="Ribosomal_uS19_SF"/>
</dbReference>
<dbReference type="NCBIfam" id="TIGR01050">
    <property type="entry name" value="rpsS_bact"/>
    <property type="match status" value="1"/>
</dbReference>
<dbReference type="PANTHER" id="PTHR11880">
    <property type="entry name" value="RIBOSOMAL PROTEIN S19P FAMILY MEMBER"/>
    <property type="match status" value="1"/>
</dbReference>
<dbReference type="PANTHER" id="PTHR11880:SF8">
    <property type="entry name" value="SMALL RIBOSOMAL SUBUNIT PROTEIN US19M"/>
    <property type="match status" value="1"/>
</dbReference>
<dbReference type="Pfam" id="PF00203">
    <property type="entry name" value="Ribosomal_S19"/>
    <property type="match status" value="1"/>
</dbReference>
<dbReference type="PIRSF" id="PIRSF002144">
    <property type="entry name" value="Ribosomal_S19"/>
    <property type="match status" value="1"/>
</dbReference>
<dbReference type="PRINTS" id="PR00975">
    <property type="entry name" value="RIBOSOMALS19"/>
</dbReference>
<dbReference type="SUPFAM" id="SSF54570">
    <property type="entry name" value="Ribosomal protein S19"/>
    <property type="match status" value="1"/>
</dbReference>
<dbReference type="PROSITE" id="PS00323">
    <property type="entry name" value="RIBOSOMAL_S19"/>
    <property type="match status" value="1"/>
</dbReference>
<organism>
    <name type="scientific">Chara vulgaris</name>
    <name type="common">Common stonewort</name>
    <dbReference type="NCBI Taxonomy" id="55564"/>
    <lineage>
        <taxon>Eukaryota</taxon>
        <taxon>Viridiplantae</taxon>
        <taxon>Streptophyta</taxon>
        <taxon>Charophyceae</taxon>
        <taxon>Charales</taxon>
        <taxon>Characeae</taxon>
        <taxon>Chara</taxon>
    </lineage>
</organism>
<protein>
    <recommendedName>
        <fullName evidence="1">Small ribosomal subunit protein uS19c</fullName>
    </recommendedName>
    <alternativeName>
        <fullName evidence="2">30S ribosomal protein S19, chloroplastic</fullName>
    </alternativeName>
</protein>
<name>RR19_CHAVU</name>
<feature type="chain" id="PRO_0000276900" description="Small ribosomal subunit protein uS19c">
    <location>
        <begin position="1"/>
        <end position="92"/>
    </location>
</feature>
<accession>Q1ACF7</accession>
<geneLocation type="chloroplast"/>